<protein>
    <recommendedName>
        <fullName evidence="1">Large ribosomal subunit protein uL24</fullName>
    </recommendedName>
    <alternativeName>
        <fullName evidence="3">50S ribosomal protein L24</fullName>
    </alternativeName>
</protein>
<gene>
    <name evidence="1" type="primary">rpl24</name>
    <name type="ordered locus">Mhun_2242</name>
</gene>
<dbReference type="EMBL" id="CP000254">
    <property type="protein sequence ID" value="ABD41947.1"/>
    <property type="molecule type" value="Genomic_DNA"/>
</dbReference>
<dbReference type="RefSeq" id="WP_011449205.1">
    <property type="nucleotide sequence ID" value="NC_007796.1"/>
</dbReference>
<dbReference type="SMR" id="Q2FT34"/>
<dbReference type="FunCoup" id="Q2FT34">
    <property type="interactions" value="172"/>
</dbReference>
<dbReference type="STRING" id="323259.Mhun_2242"/>
<dbReference type="EnsemblBacteria" id="ABD41947">
    <property type="protein sequence ID" value="ABD41947"/>
    <property type="gene ID" value="Mhun_2242"/>
</dbReference>
<dbReference type="GeneID" id="3923944"/>
<dbReference type="KEGG" id="mhu:Mhun_2242"/>
<dbReference type="eggNOG" id="arCOG04094">
    <property type="taxonomic scope" value="Archaea"/>
</dbReference>
<dbReference type="HOGENOM" id="CLU_093240_2_1_2"/>
<dbReference type="InParanoid" id="Q2FT34"/>
<dbReference type="OrthoDB" id="10899at2157"/>
<dbReference type="Proteomes" id="UP000001941">
    <property type="component" value="Chromosome"/>
</dbReference>
<dbReference type="GO" id="GO:0015934">
    <property type="term" value="C:large ribosomal subunit"/>
    <property type="evidence" value="ECO:0007669"/>
    <property type="project" value="InterPro"/>
</dbReference>
<dbReference type="GO" id="GO:0019843">
    <property type="term" value="F:rRNA binding"/>
    <property type="evidence" value="ECO:0007669"/>
    <property type="project" value="UniProtKB-UniRule"/>
</dbReference>
<dbReference type="GO" id="GO:0003735">
    <property type="term" value="F:structural constituent of ribosome"/>
    <property type="evidence" value="ECO:0007669"/>
    <property type="project" value="InterPro"/>
</dbReference>
<dbReference type="GO" id="GO:0006412">
    <property type="term" value="P:translation"/>
    <property type="evidence" value="ECO:0007669"/>
    <property type="project" value="UniProtKB-UniRule"/>
</dbReference>
<dbReference type="CDD" id="cd06089">
    <property type="entry name" value="KOW_RPL26"/>
    <property type="match status" value="1"/>
</dbReference>
<dbReference type="Gene3D" id="2.30.30.30">
    <property type="match status" value="1"/>
</dbReference>
<dbReference type="HAMAP" id="MF_01326_A">
    <property type="entry name" value="Ribosomal_uL24_A"/>
    <property type="match status" value="1"/>
</dbReference>
<dbReference type="InterPro" id="IPR005824">
    <property type="entry name" value="KOW"/>
</dbReference>
<dbReference type="InterPro" id="IPR014722">
    <property type="entry name" value="Rib_uL2_dom2"/>
</dbReference>
<dbReference type="InterPro" id="IPR005825">
    <property type="entry name" value="Ribosomal_uL24_CS"/>
</dbReference>
<dbReference type="InterPro" id="IPR005756">
    <property type="entry name" value="Ribosomal_uL24_euk/arc"/>
</dbReference>
<dbReference type="InterPro" id="IPR041988">
    <property type="entry name" value="Ribosomal_uL24_KOW"/>
</dbReference>
<dbReference type="InterPro" id="IPR008991">
    <property type="entry name" value="Translation_prot_SH3-like_sf"/>
</dbReference>
<dbReference type="NCBIfam" id="TIGR01080">
    <property type="entry name" value="rplX_A_E"/>
    <property type="match status" value="1"/>
</dbReference>
<dbReference type="PANTHER" id="PTHR11143">
    <property type="entry name" value="60S RIBOSOMAL PROTEIN L26 FAMILY MEMBER"/>
    <property type="match status" value="1"/>
</dbReference>
<dbReference type="Pfam" id="PF00467">
    <property type="entry name" value="KOW"/>
    <property type="match status" value="1"/>
</dbReference>
<dbReference type="Pfam" id="PF16906">
    <property type="entry name" value="Ribosomal_L26"/>
    <property type="match status" value="1"/>
</dbReference>
<dbReference type="SMART" id="SM00739">
    <property type="entry name" value="KOW"/>
    <property type="match status" value="1"/>
</dbReference>
<dbReference type="SUPFAM" id="SSF50104">
    <property type="entry name" value="Translation proteins SH3-like domain"/>
    <property type="match status" value="1"/>
</dbReference>
<dbReference type="PROSITE" id="PS01108">
    <property type="entry name" value="RIBOSOMAL_L24"/>
    <property type="match status" value="1"/>
</dbReference>
<organism>
    <name type="scientific">Methanospirillum hungatei JF-1 (strain ATCC 27890 / DSM 864 / NBRC 100397 / JF-1)</name>
    <dbReference type="NCBI Taxonomy" id="323259"/>
    <lineage>
        <taxon>Archaea</taxon>
        <taxon>Methanobacteriati</taxon>
        <taxon>Methanobacteriota</taxon>
        <taxon>Stenosarchaea group</taxon>
        <taxon>Methanomicrobia</taxon>
        <taxon>Methanomicrobiales</taxon>
        <taxon>Methanospirillaceae</taxon>
        <taxon>Methanospirillum</taxon>
    </lineage>
</organism>
<name>RL24_METHJ</name>
<feature type="chain" id="PRO_0000241697" description="Large ribosomal subunit protein uL24">
    <location>
        <begin position="1"/>
        <end position="120"/>
    </location>
</feature>
<feature type="region of interest" description="Disordered" evidence="2">
    <location>
        <begin position="1"/>
        <end position="26"/>
    </location>
</feature>
<feature type="compositionally biased region" description="Basic residues" evidence="2">
    <location>
        <begin position="10"/>
        <end position="24"/>
    </location>
</feature>
<evidence type="ECO:0000255" key="1">
    <source>
        <dbReference type="HAMAP-Rule" id="MF_01326"/>
    </source>
</evidence>
<evidence type="ECO:0000256" key="2">
    <source>
        <dbReference type="SAM" id="MobiDB-lite"/>
    </source>
</evidence>
<evidence type="ECO:0000305" key="3"/>
<sequence length="120" mass="13496">MVRVISSQPRKQRKARYNAPHHMRGSLLHAALSKELQGKYKRRSIRVIKGDTVKVLRGDHAGTEGLVDYVITRDARIVVDGVSVKKADGTEVPRPVDPSNVMITDLNLEDKRREQKLSGE</sequence>
<keyword id="KW-1185">Reference proteome</keyword>
<keyword id="KW-0687">Ribonucleoprotein</keyword>
<keyword id="KW-0689">Ribosomal protein</keyword>
<keyword id="KW-0694">RNA-binding</keyword>
<keyword id="KW-0699">rRNA-binding</keyword>
<proteinExistence type="inferred from homology"/>
<accession>Q2FT34</accession>
<comment type="function">
    <text evidence="1">One of two assembly initiator proteins, it binds directly to the 5'-end of the 23S rRNA, where it nucleates assembly of the 50S subunit.</text>
</comment>
<comment type="function">
    <text evidence="1">Located at the polypeptide exit tunnel on the outside of the subunit.</text>
</comment>
<comment type="subunit">
    <text evidence="1">Part of the 50S ribosomal subunit.</text>
</comment>
<comment type="similarity">
    <text evidence="1">Belongs to the universal ribosomal protein uL24 family.</text>
</comment>
<reference key="1">
    <citation type="journal article" date="2016" name="Stand. Genomic Sci.">
        <title>Complete genome sequence of Methanospirillum hungatei type strain JF1.</title>
        <authorList>
            <person name="Gunsalus R.P."/>
            <person name="Cook L.E."/>
            <person name="Crable B."/>
            <person name="Rohlin L."/>
            <person name="McDonald E."/>
            <person name="Mouttaki H."/>
            <person name="Sieber J.R."/>
            <person name="Poweleit N."/>
            <person name="Zhou H."/>
            <person name="Lapidus A.L."/>
            <person name="Daligault H.E."/>
            <person name="Land M."/>
            <person name="Gilna P."/>
            <person name="Ivanova N."/>
            <person name="Kyrpides N."/>
            <person name="Culley D.E."/>
            <person name="McInerney M.J."/>
        </authorList>
    </citation>
    <scope>NUCLEOTIDE SEQUENCE [LARGE SCALE GENOMIC DNA]</scope>
    <source>
        <strain>ATCC 27890 / DSM 864 / NBRC 100397 / JF-1</strain>
    </source>
</reference>